<organism>
    <name type="scientific">Pseudomonas entomophila (strain L48)</name>
    <dbReference type="NCBI Taxonomy" id="384676"/>
    <lineage>
        <taxon>Bacteria</taxon>
        <taxon>Pseudomonadati</taxon>
        <taxon>Pseudomonadota</taxon>
        <taxon>Gammaproteobacteria</taxon>
        <taxon>Pseudomonadales</taxon>
        <taxon>Pseudomonadaceae</taxon>
        <taxon>Pseudomonas</taxon>
    </lineage>
</organism>
<feature type="chain" id="PRO_1000005430" description="NAD kinase">
    <location>
        <begin position="1"/>
        <end position="296"/>
    </location>
</feature>
<feature type="active site" description="Proton acceptor" evidence="1">
    <location>
        <position position="72"/>
    </location>
</feature>
<feature type="binding site" evidence="1">
    <location>
        <begin position="72"/>
        <end position="73"/>
    </location>
    <ligand>
        <name>NAD(+)</name>
        <dbReference type="ChEBI" id="CHEBI:57540"/>
    </ligand>
</feature>
<feature type="binding site" evidence="1">
    <location>
        <begin position="146"/>
        <end position="147"/>
    </location>
    <ligand>
        <name>NAD(+)</name>
        <dbReference type="ChEBI" id="CHEBI:57540"/>
    </ligand>
</feature>
<feature type="binding site" evidence="1">
    <location>
        <position position="157"/>
    </location>
    <ligand>
        <name>NAD(+)</name>
        <dbReference type="ChEBI" id="CHEBI:57540"/>
    </ligand>
</feature>
<feature type="binding site" evidence="1">
    <location>
        <position position="174"/>
    </location>
    <ligand>
        <name>NAD(+)</name>
        <dbReference type="ChEBI" id="CHEBI:57540"/>
    </ligand>
</feature>
<feature type="binding site" evidence="1">
    <location>
        <position position="176"/>
    </location>
    <ligand>
        <name>NAD(+)</name>
        <dbReference type="ChEBI" id="CHEBI:57540"/>
    </ligand>
</feature>
<feature type="binding site" evidence="1">
    <location>
        <begin position="187"/>
        <end position="192"/>
    </location>
    <ligand>
        <name>NAD(+)</name>
        <dbReference type="ChEBI" id="CHEBI:57540"/>
    </ligand>
</feature>
<feature type="binding site" evidence="1">
    <location>
        <position position="247"/>
    </location>
    <ligand>
        <name>NAD(+)</name>
        <dbReference type="ChEBI" id="CHEBI:57540"/>
    </ligand>
</feature>
<reference key="1">
    <citation type="journal article" date="2006" name="Nat. Biotechnol.">
        <title>Complete genome sequence of the entomopathogenic and metabolically versatile soil bacterium Pseudomonas entomophila.</title>
        <authorList>
            <person name="Vodovar N."/>
            <person name="Vallenet D."/>
            <person name="Cruveiller S."/>
            <person name="Rouy Z."/>
            <person name="Barbe V."/>
            <person name="Acosta C."/>
            <person name="Cattolico L."/>
            <person name="Jubin C."/>
            <person name="Lajus A."/>
            <person name="Segurens B."/>
            <person name="Vacherie B."/>
            <person name="Wincker P."/>
            <person name="Weissenbach J."/>
            <person name="Lemaitre B."/>
            <person name="Medigue C."/>
            <person name="Boccard F."/>
        </authorList>
    </citation>
    <scope>NUCLEOTIDE SEQUENCE [LARGE SCALE GENOMIC DNA]</scope>
    <source>
        <strain>L48</strain>
    </source>
</reference>
<protein>
    <recommendedName>
        <fullName evidence="1">NAD kinase</fullName>
        <ecNumber evidence="1">2.7.1.23</ecNumber>
    </recommendedName>
    <alternativeName>
        <fullName evidence="1">ATP-dependent NAD kinase</fullName>
    </alternativeName>
</protein>
<accession>Q1ICQ6</accession>
<gene>
    <name evidence="1" type="primary">nadK</name>
    <name type="ordered locus">PSEEN1708</name>
</gene>
<keyword id="KW-0067">ATP-binding</keyword>
<keyword id="KW-0963">Cytoplasm</keyword>
<keyword id="KW-0418">Kinase</keyword>
<keyword id="KW-0520">NAD</keyword>
<keyword id="KW-0521">NADP</keyword>
<keyword id="KW-0547">Nucleotide-binding</keyword>
<keyword id="KW-0808">Transferase</keyword>
<dbReference type="EC" id="2.7.1.23" evidence="1"/>
<dbReference type="EMBL" id="CT573326">
    <property type="protein sequence ID" value="CAK14557.1"/>
    <property type="molecule type" value="Genomic_DNA"/>
</dbReference>
<dbReference type="RefSeq" id="WP_011532967.1">
    <property type="nucleotide sequence ID" value="NC_008027.1"/>
</dbReference>
<dbReference type="SMR" id="Q1ICQ6"/>
<dbReference type="STRING" id="384676.PSEEN1708"/>
<dbReference type="KEGG" id="pen:PSEEN1708"/>
<dbReference type="eggNOG" id="COG0061">
    <property type="taxonomic scope" value="Bacteria"/>
</dbReference>
<dbReference type="HOGENOM" id="CLU_008831_0_1_6"/>
<dbReference type="OrthoDB" id="9774737at2"/>
<dbReference type="Proteomes" id="UP000000658">
    <property type="component" value="Chromosome"/>
</dbReference>
<dbReference type="GO" id="GO:0005737">
    <property type="term" value="C:cytoplasm"/>
    <property type="evidence" value="ECO:0007669"/>
    <property type="project" value="UniProtKB-SubCell"/>
</dbReference>
<dbReference type="GO" id="GO:0005524">
    <property type="term" value="F:ATP binding"/>
    <property type="evidence" value="ECO:0007669"/>
    <property type="project" value="UniProtKB-KW"/>
</dbReference>
<dbReference type="GO" id="GO:0046872">
    <property type="term" value="F:metal ion binding"/>
    <property type="evidence" value="ECO:0007669"/>
    <property type="project" value="UniProtKB-UniRule"/>
</dbReference>
<dbReference type="GO" id="GO:0051287">
    <property type="term" value="F:NAD binding"/>
    <property type="evidence" value="ECO:0007669"/>
    <property type="project" value="UniProtKB-ARBA"/>
</dbReference>
<dbReference type="GO" id="GO:0003951">
    <property type="term" value="F:NAD+ kinase activity"/>
    <property type="evidence" value="ECO:0007669"/>
    <property type="project" value="UniProtKB-UniRule"/>
</dbReference>
<dbReference type="GO" id="GO:0019674">
    <property type="term" value="P:NAD metabolic process"/>
    <property type="evidence" value="ECO:0007669"/>
    <property type="project" value="InterPro"/>
</dbReference>
<dbReference type="GO" id="GO:0006741">
    <property type="term" value="P:NADP biosynthetic process"/>
    <property type="evidence" value="ECO:0007669"/>
    <property type="project" value="UniProtKB-UniRule"/>
</dbReference>
<dbReference type="FunFam" id="2.60.200.30:FF:000001">
    <property type="entry name" value="NAD kinase"/>
    <property type="match status" value="1"/>
</dbReference>
<dbReference type="Gene3D" id="3.40.50.10330">
    <property type="entry name" value="Probable inorganic polyphosphate/atp-NAD kinase, domain 1"/>
    <property type="match status" value="1"/>
</dbReference>
<dbReference type="Gene3D" id="2.60.200.30">
    <property type="entry name" value="Probable inorganic polyphosphate/atp-NAD kinase, domain 2"/>
    <property type="match status" value="1"/>
</dbReference>
<dbReference type="HAMAP" id="MF_00361">
    <property type="entry name" value="NAD_kinase"/>
    <property type="match status" value="1"/>
</dbReference>
<dbReference type="InterPro" id="IPR017438">
    <property type="entry name" value="ATP-NAD_kinase_N"/>
</dbReference>
<dbReference type="InterPro" id="IPR017437">
    <property type="entry name" value="ATP-NAD_kinase_PpnK-typ_C"/>
</dbReference>
<dbReference type="InterPro" id="IPR016064">
    <property type="entry name" value="NAD/diacylglycerol_kinase_sf"/>
</dbReference>
<dbReference type="InterPro" id="IPR002504">
    <property type="entry name" value="NADK"/>
</dbReference>
<dbReference type="NCBIfam" id="NF002306">
    <property type="entry name" value="PRK01231.1"/>
    <property type="match status" value="1"/>
</dbReference>
<dbReference type="PANTHER" id="PTHR20275">
    <property type="entry name" value="NAD KINASE"/>
    <property type="match status" value="1"/>
</dbReference>
<dbReference type="PANTHER" id="PTHR20275:SF0">
    <property type="entry name" value="NAD KINASE"/>
    <property type="match status" value="1"/>
</dbReference>
<dbReference type="Pfam" id="PF01513">
    <property type="entry name" value="NAD_kinase"/>
    <property type="match status" value="1"/>
</dbReference>
<dbReference type="Pfam" id="PF20143">
    <property type="entry name" value="NAD_kinase_C"/>
    <property type="match status" value="1"/>
</dbReference>
<dbReference type="SUPFAM" id="SSF111331">
    <property type="entry name" value="NAD kinase/diacylglycerol kinase-like"/>
    <property type="match status" value="1"/>
</dbReference>
<sequence>MEQFRNIGIIGRLGSSQVLDTIRRLKKFLLERHLHVILEDTIAEVLPGHGLQTSTRKLLGEVCDLVIVVGGDGSLLGAARALARHNIPVLGINRGNLGFLTDIRPDELEEKVAEVLDGHYLVENRFLLQAEVRRHNEAIGQGDALNDVVLHPGKSTRMIEFEIYIDGQFVCSQKADGLIVATPTGSTAYALSAGGPIMHPKLDAIVIVPMYPHTLSGRPIVVDGNSELKIVVSKDLQIYPQVSCDGQNHFTCAPGDTITVSKKPQKLRLIHPLDHNYYEVCRTKLGWGSRLGGRDD</sequence>
<evidence type="ECO:0000255" key="1">
    <source>
        <dbReference type="HAMAP-Rule" id="MF_00361"/>
    </source>
</evidence>
<proteinExistence type="inferred from homology"/>
<name>NADK_PSEE4</name>
<comment type="function">
    <text evidence="1">Involved in the regulation of the intracellular balance of NAD and NADP, and is a key enzyme in the biosynthesis of NADP. Catalyzes specifically the phosphorylation on 2'-hydroxyl of the adenosine moiety of NAD to yield NADP.</text>
</comment>
<comment type="catalytic activity">
    <reaction evidence="1">
        <text>NAD(+) + ATP = ADP + NADP(+) + H(+)</text>
        <dbReference type="Rhea" id="RHEA:18629"/>
        <dbReference type="ChEBI" id="CHEBI:15378"/>
        <dbReference type="ChEBI" id="CHEBI:30616"/>
        <dbReference type="ChEBI" id="CHEBI:57540"/>
        <dbReference type="ChEBI" id="CHEBI:58349"/>
        <dbReference type="ChEBI" id="CHEBI:456216"/>
        <dbReference type="EC" id="2.7.1.23"/>
    </reaction>
</comment>
<comment type="cofactor">
    <cofactor evidence="1">
        <name>a divalent metal cation</name>
        <dbReference type="ChEBI" id="CHEBI:60240"/>
    </cofactor>
</comment>
<comment type="subcellular location">
    <subcellularLocation>
        <location evidence="1">Cytoplasm</location>
    </subcellularLocation>
</comment>
<comment type="similarity">
    <text evidence="1">Belongs to the NAD kinase family.</text>
</comment>